<protein>
    <recommendedName>
        <fullName evidence="1">Large-conductance mechanosensitive channel</fullName>
    </recommendedName>
</protein>
<comment type="function">
    <text evidence="1">Channel that opens in response to stretch forces in the membrane lipid bilayer. May participate in the regulation of osmotic pressure changes within the cell.</text>
</comment>
<comment type="subunit">
    <text evidence="1">Homopentamer.</text>
</comment>
<comment type="subcellular location">
    <subcellularLocation>
        <location evidence="1">Cell inner membrane</location>
        <topology evidence="1">Multi-pass membrane protein</topology>
    </subcellularLocation>
</comment>
<comment type="similarity">
    <text evidence="1">Belongs to the MscL family.</text>
</comment>
<organism>
    <name type="scientific">Xanthomonas oryzae pv. oryzae (strain PXO99A)</name>
    <dbReference type="NCBI Taxonomy" id="360094"/>
    <lineage>
        <taxon>Bacteria</taxon>
        <taxon>Pseudomonadati</taxon>
        <taxon>Pseudomonadota</taxon>
        <taxon>Gammaproteobacteria</taxon>
        <taxon>Lysobacterales</taxon>
        <taxon>Lysobacteraceae</taxon>
        <taxon>Xanthomonas</taxon>
    </lineage>
</organism>
<accession>B2SWL6</accession>
<evidence type="ECO:0000255" key="1">
    <source>
        <dbReference type="HAMAP-Rule" id="MF_00115"/>
    </source>
</evidence>
<name>MSCL_XANOP</name>
<sequence>MGMVSEFKQFAIRGNVIDLAVGVVIGAAFGKIVTALVEKIIMPPIGWAIGNVDFSRLAWVLKPAGVDATGKDIPAVAIGYGDFINTVVQFVIIAFAIFLLVKLINRVTNRKPDAPKGPSEEVLLLREIRDSLKNDTLKSG</sequence>
<dbReference type="EMBL" id="CP000967">
    <property type="protein sequence ID" value="ACD60227.1"/>
    <property type="molecule type" value="Genomic_DNA"/>
</dbReference>
<dbReference type="RefSeq" id="WP_012445603.1">
    <property type="nucleotide sequence ID" value="NC_010717.2"/>
</dbReference>
<dbReference type="SMR" id="B2SWL6"/>
<dbReference type="KEGG" id="xop:PXO_01831"/>
<dbReference type="eggNOG" id="COG1970">
    <property type="taxonomic scope" value="Bacteria"/>
</dbReference>
<dbReference type="HOGENOM" id="CLU_095787_0_0_6"/>
<dbReference type="Proteomes" id="UP000001740">
    <property type="component" value="Chromosome"/>
</dbReference>
<dbReference type="GO" id="GO:0005886">
    <property type="term" value="C:plasma membrane"/>
    <property type="evidence" value="ECO:0007669"/>
    <property type="project" value="UniProtKB-SubCell"/>
</dbReference>
<dbReference type="GO" id="GO:0008381">
    <property type="term" value="F:mechanosensitive monoatomic ion channel activity"/>
    <property type="evidence" value="ECO:0007669"/>
    <property type="project" value="UniProtKB-UniRule"/>
</dbReference>
<dbReference type="FunFam" id="1.10.1200.120:FF:000001">
    <property type="entry name" value="Large-conductance mechanosensitive channel"/>
    <property type="match status" value="1"/>
</dbReference>
<dbReference type="Gene3D" id="1.10.1200.120">
    <property type="entry name" value="Large-conductance mechanosensitive channel, MscL, domain 1"/>
    <property type="match status" value="1"/>
</dbReference>
<dbReference type="HAMAP" id="MF_00115">
    <property type="entry name" value="MscL"/>
    <property type="match status" value="1"/>
</dbReference>
<dbReference type="InterPro" id="IPR019823">
    <property type="entry name" value="Mechanosensitive_channel_CS"/>
</dbReference>
<dbReference type="InterPro" id="IPR001185">
    <property type="entry name" value="MS_channel"/>
</dbReference>
<dbReference type="InterPro" id="IPR037673">
    <property type="entry name" value="MSC/AndL"/>
</dbReference>
<dbReference type="InterPro" id="IPR036019">
    <property type="entry name" value="MscL_channel"/>
</dbReference>
<dbReference type="NCBIfam" id="TIGR00220">
    <property type="entry name" value="mscL"/>
    <property type="match status" value="1"/>
</dbReference>
<dbReference type="NCBIfam" id="NF001843">
    <property type="entry name" value="PRK00567.1-4"/>
    <property type="match status" value="1"/>
</dbReference>
<dbReference type="PANTHER" id="PTHR30266:SF2">
    <property type="entry name" value="LARGE-CONDUCTANCE MECHANOSENSITIVE CHANNEL"/>
    <property type="match status" value="1"/>
</dbReference>
<dbReference type="PANTHER" id="PTHR30266">
    <property type="entry name" value="MECHANOSENSITIVE CHANNEL MSCL"/>
    <property type="match status" value="1"/>
</dbReference>
<dbReference type="Pfam" id="PF01741">
    <property type="entry name" value="MscL"/>
    <property type="match status" value="1"/>
</dbReference>
<dbReference type="PRINTS" id="PR01264">
    <property type="entry name" value="MECHCHANNEL"/>
</dbReference>
<dbReference type="SUPFAM" id="SSF81330">
    <property type="entry name" value="Gated mechanosensitive channel"/>
    <property type="match status" value="1"/>
</dbReference>
<dbReference type="PROSITE" id="PS01327">
    <property type="entry name" value="MSCL"/>
    <property type="match status" value="1"/>
</dbReference>
<proteinExistence type="inferred from homology"/>
<gene>
    <name evidence="1" type="primary">mscL</name>
    <name type="ordered locus">PXO_01831</name>
</gene>
<feature type="chain" id="PRO_1000094931" description="Large-conductance mechanosensitive channel">
    <location>
        <begin position="1"/>
        <end position="140"/>
    </location>
</feature>
<feature type="transmembrane region" description="Helical" evidence="1">
    <location>
        <begin position="16"/>
        <end position="36"/>
    </location>
</feature>
<feature type="transmembrane region" description="Helical" evidence="1">
    <location>
        <begin position="84"/>
        <end position="104"/>
    </location>
</feature>
<reference key="1">
    <citation type="journal article" date="2008" name="BMC Genomics">
        <title>Genome sequence and rapid evolution of the rice pathogen Xanthomonas oryzae pv. oryzae PXO99A.</title>
        <authorList>
            <person name="Salzberg S.L."/>
            <person name="Sommer D.D."/>
            <person name="Schatz M.C."/>
            <person name="Phillippy A.M."/>
            <person name="Rabinowicz P.D."/>
            <person name="Tsuge S."/>
            <person name="Furutani A."/>
            <person name="Ochiai H."/>
            <person name="Delcher A.L."/>
            <person name="Kelley D."/>
            <person name="Madupu R."/>
            <person name="Puiu D."/>
            <person name="Radune D."/>
            <person name="Shumway M."/>
            <person name="Trapnell C."/>
            <person name="Aparna G."/>
            <person name="Jha G."/>
            <person name="Pandey A."/>
            <person name="Patil P.B."/>
            <person name="Ishihara H."/>
            <person name="Meyer D.F."/>
            <person name="Szurek B."/>
            <person name="Verdier V."/>
            <person name="Koebnik R."/>
            <person name="Dow J.M."/>
            <person name="Ryan R.P."/>
            <person name="Hirata H."/>
            <person name="Tsuyumu S."/>
            <person name="Won Lee S."/>
            <person name="Seo Y.-S."/>
            <person name="Sriariyanum M."/>
            <person name="Ronald P.C."/>
            <person name="Sonti R.V."/>
            <person name="Van Sluys M.-A."/>
            <person name="Leach J.E."/>
            <person name="White F.F."/>
            <person name="Bogdanove A.J."/>
        </authorList>
    </citation>
    <scope>NUCLEOTIDE SEQUENCE [LARGE SCALE GENOMIC DNA]</scope>
    <source>
        <strain>PXO99A</strain>
    </source>
</reference>
<keyword id="KW-0997">Cell inner membrane</keyword>
<keyword id="KW-1003">Cell membrane</keyword>
<keyword id="KW-0407">Ion channel</keyword>
<keyword id="KW-0406">Ion transport</keyword>
<keyword id="KW-0472">Membrane</keyword>
<keyword id="KW-0812">Transmembrane</keyword>
<keyword id="KW-1133">Transmembrane helix</keyword>
<keyword id="KW-0813">Transport</keyword>